<comment type="function">
    <text>Implicated in immunoproteasome assembly and required for efficient antigen processing. The PA28 activator complex enhances the generation of class I binding peptides by altering the cleavage pattern of the proteasome.</text>
</comment>
<comment type="subunit">
    <text evidence="1">Heterodimer of PSME1 and PSME2, which forms a hexameric ring. PSME1 can form homoheptamers (By similarity).</text>
</comment>
<comment type="induction">
    <text>By interferon gamma.</text>
</comment>
<comment type="similarity">
    <text evidence="3">Belongs to the PA28 family.</text>
</comment>
<sequence>MATLRVHPEAQAKVDVFREDLCSKTENLLGSYFPKKISELDAFLKEPALNEANLSNLKAPLDIPVPDPVKEKEKEERKKQQEKEEKEEKKKGDEDDKGPPCGPVNCNEKIVVLLQRLKPEIKDVTEQLNLVTTWLQLQIPRIEDGNNFGVAVQEKVFELMTNLHTKLEGFHTQISKYFSERGDAVAKAAKQPHVGDYRQLVHELDEAEYQEIRLMVMEIRNAYAVLYDIILKNFEKLKKPRGETKGMIY</sequence>
<name>PSME1_MOUSE</name>
<reference key="1">
    <citation type="journal article" date="1997" name="Immunogenetics">
        <title>PA28 subunits of the mouse proteasome: primary structures and chromosomal localization of the genes.</title>
        <authorList>
            <person name="Kandil E."/>
            <person name="Kohda K."/>
            <person name="Ishibashi T."/>
            <person name="Tanaka K."/>
            <person name="Kasahara M."/>
        </authorList>
    </citation>
    <scope>NUCLEOTIDE SEQUENCE [MRNA]</scope>
    <source>
        <strain>C57BL/6J</strain>
        <tissue>Spleen</tissue>
    </source>
</reference>
<reference key="2">
    <citation type="journal article" date="1997" name="Immunogenetics">
        <title>Sequence and expression of mouse proteasome activator PA28 and the related autoantigen Ki.</title>
        <authorList>
            <person name="Jiang H."/>
            <person name="Monaco J.J."/>
        </authorList>
    </citation>
    <scope>NUCLEOTIDE SEQUENCE [MRNA]</scope>
    <source>
        <strain>B10.BR</strain>
    </source>
</reference>
<reference key="3">
    <citation type="journal article" date="1998" name="J. Immunol.">
        <title>Characterization of the mouse PA28 activator complex gene family: complete organizations of the three member genes and a physical map of the approximately 150-kb region containing the alpha- and beta-subunit genes.</title>
        <authorList>
            <person name="Kohda K."/>
            <person name="Ishibashi T."/>
            <person name="Shimbara N."/>
            <person name="Tanaka K."/>
            <person name="Matsuda Y."/>
            <person name="Kasahara M."/>
        </authorList>
    </citation>
    <scope>NUCLEOTIDE SEQUENCE [GENOMIC DNA]</scope>
    <source>
        <strain>129/SvJ</strain>
    </source>
</reference>
<reference key="4">
    <citation type="journal article" date="2001" name="Immunogenetics">
        <title>Nucleotide sequence analysis of the ~35-kb segment containing interferon-gamma-inducible mouse proteasome activator genes.</title>
        <authorList>
            <person name="Yawata M."/>
            <person name="Murata S."/>
            <person name="Tanaka K."/>
            <person name="Ishigatsubo Y."/>
            <person name="Kasahara M."/>
        </authorList>
    </citation>
    <scope>NUCLEOTIDE SEQUENCE</scope>
    <source>
        <strain>129/SvJ</strain>
    </source>
</reference>
<reference key="5">
    <citation type="journal article" date="2005" name="Science">
        <title>The transcriptional landscape of the mammalian genome.</title>
        <authorList>
            <person name="Carninci P."/>
            <person name="Kasukawa T."/>
            <person name="Katayama S."/>
            <person name="Gough J."/>
            <person name="Frith M.C."/>
            <person name="Maeda N."/>
            <person name="Oyama R."/>
            <person name="Ravasi T."/>
            <person name="Lenhard B."/>
            <person name="Wells C."/>
            <person name="Kodzius R."/>
            <person name="Shimokawa K."/>
            <person name="Bajic V.B."/>
            <person name="Brenner S.E."/>
            <person name="Batalov S."/>
            <person name="Forrest A.R."/>
            <person name="Zavolan M."/>
            <person name="Davis M.J."/>
            <person name="Wilming L.G."/>
            <person name="Aidinis V."/>
            <person name="Allen J.E."/>
            <person name="Ambesi-Impiombato A."/>
            <person name="Apweiler R."/>
            <person name="Aturaliya R.N."/>
            <person name="Bailey T.L."/>
            <person name="Bansal M."/>
            <person name="Baxter L."/>
            <person name="Beisel K.W."/>
            <person name="Bersano T."/>
            <person name="Bono H."/>
            <person name="Chalk A.M."/>
            <person name="Chiu K.P."/>
            <person name="Choudhary V."/>
            <person name="Christoffels A."/>
            <person name="Clutterbuck D.R."/>
            <person name="Crowe M.L."/>
            <person name="Dalla E."/>
            <person name="Dalrymple B.P."/>
            <person name="de Bono B."/>
            <person name="Della Gatta G."/>
            <person name="di Bernardo D."/>
            <person name="Down T."/>
            <person name="Engstrom P."/>
            <person name="Fagiolini M."/>
            <person name="Faulkner G."/>
            <person name="Fletcher C.F."/>
            <person name="Fukushima T."/>
            <person name="Furuno M."/>
            <person name="Futaki S."/>
            <person name="Gariboldi M."/>
            <person name="Georgii-Hemming P."/>
            <person name="Gingeras T.R."/>
            <person name="Gojobori T."/>
            <person name="Green R.E."/>
            <person name="Gustincich S."/>
            <person name="Harbers M."/>
            <person name="Hayashi Y."/>
            <person name="Hensch T.K."/>
            <person name="Hirokawa N."/>
            <person name="Hill D."/>
            <person name="Huminiecki L."/>
            <person name="Iacono M."/>
            <person name="Ikeo K."/>
            <person name="Iwama A."/>
            <person name="Ishikawa T."/>
            <person name="Jakt M."/>
            <person name="Kanapin A."/>
            <person name="Katoh M."/>
            <person name="Kawasawa Y."/>
            <person name="Kelso J."/>
            <person name="Kitamura H."/>
            <person name="Kitano H."/>
            <person name="Kollias G."/>
            <person name="Krishnan S.P."/>
            <person name="Kruger A."/>
            <person name="Kummerfeld S.K."/>
            <person name="Kurochkin I.V."/>
            <person name="Lareau L.F."/>
            <person name="Lazarevic D."/>
            <person name="Lipovich L."/>
            <person name="Liu J."/>
            <person name="Liuni S."/>
            <person name="McWilliam S."/>
            <person name="Madan Babu M."/>
            <person name="Madera M."/>
            <person name="Marchionni L."/>
            <person name="Matsuda H."/>
            <person name="Matsuzawa S."/>
            <person name="Miki H."/>
            <person name="Mignone F."/>
            <person name="Miyake S."/>
            <person name="Morris K."/>
            <person name="Mottagui-Tabar S."/>
            <person name="Mulder N."/>
            <person name="Nakano N."/>
            <person name="Nakauchi H."/>
            <person name="Ng P."/>
            <person name="Nilsson R."/>
            <person name="Nishiguchi S."/>
            <person name="Nishikawa S."/>
            <person name="Nori F."/>
            <person name="Ohara O."/>
            <person name="Okazaki Y."/>
            <person name="Orlando V."/>
            <person name="Pang K.C."/>
            <person name="Pavan W.J."/>
            <person name="Pavesi G."/>
            <person name="Pesole G."/>
            <person name="Petrovsky N."/>
            <person name="Piazza S."/>
            <person name="Reed J."/>
            <person name="Reid J.F."/>
            <person name="Ring B.Z."/>
            <person name="Ringwald M."/>
            <person name="Rost B."/>
            <person name="Ruan Y."/>
            <person name="Salzberg S.L."/>
            <person name="Sandelin A."/>
            <person name="Schneider C."/>
            <person name="Schoenbach C."/>
            <person name="Sekiguchi K."/>
            <person name="Semple C.A."/>
            <person name="Seno S."/>
            <person name="Sessa L."/>
            <person name="Sheng Y."/>
            <person name="Shibata Y."/>
            <person name="Shimada H."/>
            <person name="Shimada K."/>
            <person name="Silva D."/>
            <person name="Sinclair B."/>
            <person name="Sperling S."/>
            <person name="Stupka E."/>
            <person name="Sugiura K."/>
            <person name="Sultana R."/>
            <person name="Takenaka Y."/>
            <person name="Taki K."/>
            <person name="Tammoja K."/>
            <person name="Tan S.L."/>
            <person name="Tang S."/>
            <person name="Taylor M.S."/>
            <person name="Tegner J."/>
            <person name="Teichmann S.A."/>
            <person name="Ueda H.R."/>
            <person name="van Nimwegen E."/>
            <person name="Verardo R."/>
            <person name="Wei C.L."/>
            <person name="Yagi K."/>
            <person name="Yamanishi H."/>
            <person name="Zabarovsky E."/>
            <person name="Zhu S."/>
            <person name="Zimmer A."/>
            <person name="Hide W."/>
            <person name="Bult C."/>
            <person name="Grimmond S.M."/>
            <person name="Teasdale R.D."/>
            <person name="Liu E.T."/>
            <person name="Brusic V."/>
            <person name="Quackenbush J."/>
            <person name="Wahlestedt C."/>
            <person name="Mattick J.S."/>
            <person name="Hume D.A."/>
            <person name="Kai C."/>
            <person name="Sasaki D."/>
            <person name="Tomaru Y."/>
            <person name="Fukuda S."/>
            <person name="Kanamori-Katayama M."/>
            <person name="Suzuki M."/>
            <person name="Aoki J."/>
            <person name="Arakawa T."/>
            <person name="Iida J."/>
            <person name="Imamura K."/>
            <person name="Itoh M."/>
            <person name="Kato T."/>
            <person name="Kawaji H."/>
            <person name="Kawagashira N."/>
            <person name="Kawashima T."/>
            <person name="Kojima M."/>
            <person name="Kondo S."/>
            <person name="Konno H."/>
            <person name="Nakano K."/>
            <person name="Ninomiya N."/>
            <person name="Nishio T."/>
            <person name="Okada M."/>
            <person name="Plessy C."/>
            <person name="Shibata K."/>
            <person name="Shiraki T."/>
            <person name="Suzuki S."/>
            <person name="Tagami M."/>
            <person name="Waki K."/>
            <person name="Watahiki A."/>
            <person name="Okamura-Oho Y."/>
            <person name="Suzuki H."/>
            <person name="Kawai J."/>
            <person name="Hayashizaki Y."/>
        </authorList>
    </citation>
    <scope>NUCLEOTIDE SEQUENCE [LARGE SCALE MRNA]</scope>
    <source>
        <strain>C57BL/6J</strain>
        <tissue>Embryonic head</tissue>
        <tissue>Small intestine</tissue>
    </source>
</reference>
<reference key="6">
    <citation type="journal article" date="2010" name="Cell">
        <title>A tissue-specific atlas of mouse protein phosphorylation and expression.</title>
        <authorList>
            <person name="Huttlin E.L."/>
            <person name="Jedrychowski M.P."/>
            <person name="Elias J.E."/>
            <person name="Goswami T."/>
            <person name="Rad R."/>
            <person name="Beausoleil S.A."/>
            <person name="Villen J."/>
            <person name="Haas W."/>
            <person name="Sowa M.E."/>
            <person name="Gygi S.P."/>
        </authorList>
    </citation>
    <scope>IDENTIFICATION BY MASS SPECTROMETRY [LARGE SCALE ANALYSIS]</scope>
    <source>
        <tissue>Brain</tissue>
        <tissue>Brown adipose tissue</tissue>
        <tissue>Heart</tissue>
        <tissue>Kidney</tissue>
        <tissue>Liver</tissue>
        <tissue>Lung</tissue>
        <tissue>Pancreas</tissue>
        <tissue>Spleen</tissue>
        <tissue>Testis</tissue>
    </source>
</reference>
<evidence type="ECO:0000250" key="1"/>
<evidence type="ECO:0000256" key="2">
    <source>
        <dbReference type="SAM" id="MobiDB-lite"/>
    </source>
</evidence>
<evidence type="ECO:0000305" key="3"/>
<evidence type="ECO:0007829" key="4">
    <source>
        <dbReference type="PDB" id="5MSJ"/>
    </source>
</evidence>
<evidence type="ECO:0007829" key="5">
    <source>
        <dbReference type="PDB" id="5MX5"/>
    </source>
</evidence>
<feature type="chain" id="PRO_0000161781" description="Proteasome activator complex subunit 1">
    <location>
        <begin position="1"/>
        <end position="249"/>
    </location>
</feature>
<feature type="region of interest" description="Disordered" evidence="2">
    <location>
        <begin position="59"/>
        <end position="102"/>
    </location>
</feature>
<feature type="compositionally biased region" description="Basic and acidic residues" evidence="2">
    <location>
        <begin position="68"/>
        <end position="98"/>
    </location>
</feature>
<feature type="sequence conflict" description="In Ref. 5; BAB25712." evidence="3" ref="5">
    <original>F</original>
    <variation>L</variation>
    <location>
        <position position="17"/>
    </location>
</feature>
<feature type="sequence conflict" description="In Ref. 5; BAB25712." evidence="3" ref="5">
    <original>K</original>
    <variation>E</variation>
    <location>
        <position position="97"/>
    </location>
</feature>
<feature type="sequence conflict" description="In Ref. 2; AAC53295." evidence="3" ref="2">
    <original>A</original>
    <variation>S</variation>
    <location>
        <position position="151"/>
    </location>
</feature>
<feature type="sequence conflict" description="In Ref. 2; AAC53295." evidence="3" ref="2">
    <original>V</original>
    <variation>L</variation>
    <location>
        <position position="156"/>
    </location>
</feature>
<feature type="helix" evidence="5">
    <location>
        <begin position="8"/>
        <end position="30"/>
    </location>
</feature>
<feature type="helix" evidence="5">
    <location>
        <begin position="32"/>
        <end position="45"/>
    </location>
</feature>
<feature type="helix" evidence="5">
    <location>
        <begin position="47"/>
        <end position="49"/>
    </location>
</feature>
<feature type="helix" evidence="5">
    <location>
        <begin position="54"/>
        <end position="57"/>
    </location>
</feature>
<feature type="helix" evidence="5">
    <location>
        <begin position="69"/>
        <end position="72"/>
    </location>
</feature>
<feature type="helix" evidence="5">
    <location>
        <begin position="108"/>
        <end position="137"/>
    </location>
</feature>
<feature type="strand" evidence="4">
    <location>
        <begin position="144"/>
        <end position="146"/>
    </location>
</feature>
<feature type="helix" evidence="5">
    <location>
        <begin position="148"/>
        <end position="190"/>
    </location>
</feature>
<feature type="helix" evidence="5">
    <location>
        <begin position="196"/>
        <end position="232"/>
    </location>
</feature>
<feature type="helix" evidence="5">
    <location>
        <begin position="234"/>
        <end position="238"/>
    </location>
</feature>
<keyword id="KW-0002">3D-structure</keyword>
<keyword id="KW-0647">Proteasome</keyword>
<keyword id="KW-1185">Reference proteome</keyword>
<accession>P97371</accession>
<accession>O35561</accession>
<accession>Q9D841</accession>
<gene>
    <name type="primary">Psme1</name>
</gene>
<protein>
    <recommendedName>
        <fullName>Proteasome activator complex subunit 1</fullName>
    </recommendedName>
    <alternativeName>
        <fullName>11S regulator complex subunit alpha</fullName>
        <shortName>REG-alpha</shortName>
    </alternativeName>
    <alternativeName>
        <fullName>Activator of multicatalytic protease subunit 1</fullName>
    </alternativeName>
    <alternativeName>
        <fullName>Proteasome activator 28 subunit alpha</fullName>
        <shortName>PA28a</shortName>
        <shortName>PA28alpha</shortName>
    </alternativeName>
</protein>
<dbReference type="EMBL" id="D87909">
    <property type="protein sequence ID" value="BAA22039.1"/>
    <property type="molecule type" value="mRNA"/>
</dbReference>
<dbReference type="EMBL" id="U60328">
    <property type="protein sequence ID" value="AAC53295.1"/>
    <property type="molecule type" value="mRNA"/>
</dbReference>
<dbReference type="EMBL" id="AB007136">
    <property type="protein sequence ID" value="BAA28835.1"/>
    <property type="molecule type" value="Genomic_DNA"/>
</dbReference>
<dbReference type="EMBL" id="AB053120">
    <property type="protein sequence ID" value="BAB47403.1"/>
    <property type="molecule type" value="Genomic_DNA"/>
</dbReference>
<dbReference type="EMBL" id="AK019390">
    <property type="protein sequence ID" value="BAB31696.1"/>
    <property type="molecule type" value="mRNA"/>
</dbReference>
<dbReference type="EMBL" id="AK008514">
    <property type="protein sequence ID" value="BAB25712.1"/>
    <property type="molecule type" value="mRNA"/>
</dbReference>
<dbReference type="CCDS" id="CCDS36931.1"/>
<dbReference type="RefSeq" id="NP_035319.1">
    <property type="nucleotide sequence ID" value="NM_011189.1"/>
</dbReference>
<dbReference type="PDB" id="5MSJ">
    <property type="method" value="X-ray"/>
    <property type="resolution" value="3.50 A"/>
    <property type="chains" value="A/B/C/D/E/F/G/H/I/J/K/L/M/N/O/P/Q/R/S/T/U/V/W/X/Y/Z/a/b=1-249"/>
</dbReference>
<dbReference type="PDB" id="5MX5">
    <property type="method" value="X-ray"/>
    <property type="resolution" value="2.90 A"/>
    <property type="chains" value="A/C/E/G/H/J/L/N=1-249"/>
</dbReference>
<dbReference type="PDBsum" id="5MSJ"/>
<dbReference type="PDBsum" id="5MX5"/>
<dbReference type="SMR" id="P97371"/>
<dbReference type="BioGRID" id="202432">
    <property type="interactions" value="54"/>
</dbReference>
<dbReference type="FunCoup" id="P97371">
    <property type="interactions" value="1234"/>
</dbReference>
<dbReference type="IntAct" id="P97371">
    <property type="interactions" value="1"/>
</dbReference>
<dbReference type="STRING" id="10090.ENSMUSP00000134735"/>
<dbReference type="GlyGen" id="P97371">
    <property type="glycosylation" value="2 sites, 1 N-linked glycan (1 site), 1 O-linked glycan (1 site)"/>
</dbReference>
<dbReference type="iPTMnet" id="P97371"/>
<dbReference type="PhosphoSitePlus" id="P97371"/>
<dbReference type="SwissPalm" id="P97371"/>
<dbReference type="jPOST" id="P97371"/>
<dbReference type="PaxDb" id="10090-ENSMUSP00000134735"/>
<dbReference type="ProteomicsDB" id="291577"/>
<dbReference type="Pumba" id="P97371"/>
<dbReference type="Antibodypedia" id="1712">
    <property type="antibodies" value="330 antibodies from 37 providers"/>
</dbReference>
<dbReference type="DNASU" id="19186"/>
<dbReference type="Ensembl" id="ENSMUST00000174259.8">
    <property type="protein sequence ID" value="ENSMUSP00000134735.2"/>
    <property type="gene ID" value="ENSMUSG00000022216.18"/>
</dbReference>
<dbReference type="GeneID" id="19186"/>
<dbReference type="KEGG" id="mmu:19186"/>
<dbReference type="UCSC" id="uc007tzd.1">
    <property type="organism name" value="mouse"/>
</dbReference>
<dbReference type="AGR" id="MGI:1096367"/>
<dbReference type="CTD" id="5720"/>
<dbReference type="MGI" id="MGI:1096367">
    <property type="gene designation" value="Psme1"/>
</dbReference>
<dbReference type="VEuPathDB" id="HostDB:ENSMUSG00000022216"/>
<dbReference type="eggNOG" id="KOG4470">
    <property type="taxonomic scope" value="Eukaryota"/>
</dbReference>
<dbReference type="GeneTree" id="ENSGT00950000183098"/>
<dbReference type="InParanoid" id="P97371"/>
<dbReference type="OMA" id="CGPIYSN"/>
<dbReference type="OrthoDB" id="6591885at2759"/>
<dbReference type="PhylomeDB" id="P97371"/>
<dbReference type="TreeFam" id="TF106236"/>
<dbReference type="Reactome" id="R-MMU-9907900">
    <property type="pathway name" value="Proteasome assembly"/>
</dbReference>
<dbReference type="BioGRID-ORCS" id="19186">
    <property type="hits" value="8 hits in 82 CRISPR screens"/>
</dbReference>
<dbReference type="ChiTaRS" id="Psme1">
    <property type="organism name" value="mouse"/>
</dbReference>
<dbReference type="PRO" id="PR:P97371"/>
<dbReference type="Proteomes" id="UP000000589">
    <property type="component" value="Chromosome 14"/>
</dbReference>
<dbReference type="RNAct" id="P97371">
    <property type="molecule type" value="protein"/>
</dbReference>
<dbReference type="Bgee" id="ENSMUSG00000022216">
    <property type="expression patterns" value="Expressed in peripheral lymph node and 261 other cell types or tissues"/>
</dbReference>
<dbReference type="ExpressionAtlas" id="P97371">
    <property type="expression patterns" value="baseline and differential"/>
</dbReference>
<dbReference type="GO" id="GO:0008537">
    <property type="term" value="C:proteasome activator complex"/>
    <property type="evidence" value="ECO:0007669"/>
    <property type="project" value="InterPro"/>
</dbReference>
<dbReference type="GO" id="GO:0019884">
    <property type="term" value="P:antigen processing and presentation of exogenous antigen"/>
    <property type="evidence" value="ECO:0000315"/>
    <property type="project" value="MGI"/>
</dbReference>
<dbReference type="FunFam" id="1.20.120.180:FF:000002">
    <property type="entry name" value="Proteasome activator complex subunit 1"/>
    <property type="match status" value="1"/>
</dbReference>
<dbReference type="FunFam" id="1.20.5.120:FF:000001">
    <property type="entry name" value="Proteasome activator complex subunit 3"/>
    <property type="match status" value="1"/>
</dbReference>
<dbReference type="Gene3D" id="1.20.120.180">
    <property type="entry name" value="Proteasome activator pa28, C-terminal domain"/>
    <property type="match status" value="1"/>
</dbReference>
<dbReference type="Gene3D" id="1.20.5.120">
    <property type="entry name" value="Proteasome activator pa28, N-terminal domain"/>
    <property type="match status" value="1"/>
</dbReference>
<dbReference type="InterPro" id="IPR003186">
    <property type="entry name" value="PA28_C"/>
</dbReference>
<dbReference type="InterPro" id="IPR036997">
    <property type="entry name" value="PA28_C_sf"/>
</dbReference>
<dbReference type="InterPro" id="IPR036996">
    <property type="entry name" value="PA28_N_sf"/>
</dbReference>
<dbReference type="InterPro" id="IPR009077">
    <property type="entry name" value="Proteasome_activ_PA28"/>
</dbReference>
<dbReference type="InterPro" id="IPR003185">
    <property type="entry name" value="Proteasome_activ_PA28_N"/>
</dbReference>
<dbReference type="InterPro" id="IPR036252">
    <property type="entry name" value="Proteasome_activ_sf"/>
</dbReference>
<dbReference type="PANTHER" id="PTHR10660:SF5">
    <property type="entry name" value="PROTEASOME ACTIVATOR COMPLEX SUBUNIT 1"/>
    <property type="match status" value="1"/>
</dbReference>
<dbReference type="PANTHER" id="PTHR10660">
    <property type="entry name" value="PROTEASOME REGULATOR PA28"/>
    <property type="match status" value="1"/>
</dbReference>
<dbReference type="Pfam" id="PF02252">
    <property type="entry name" value="PA28_C"/>
    <property type="match status" value="1"/>
</dbReference>
<dbReference type="Pfam" id="PF02251">
    <property type="entry name" value="PA28_N"/>
    <property type="match status" value="1"/>
</dbReference>
<dbReference type="SUPFAM" id="SSF47216">
    <property type="entry name" value="Proteasome activator"/>
    <property type="match status" value="1"/>
</dbReference>
<organism>
    <name type="scientific">Mus musculus</name>
    <name type="common">Mouse</name>
    <dbReference type="NCBI Taxonomy" id="10090"/>
    <lineage>
        <taxon>Eukaryota</taxon>
        <taxon>Metazoa</taxon>
        <taxon>Chordata</taxon>
        <taxon>Craniata</taxon>
        <taxon>Vertebrata</taxon>
        <taxon>Euteleostomi</taxon>
        <taxon>Mammalia</taxon>
        <taxon>Eutheria</taxon>
        <taxon>Euarchontoglires</taxon>
        <taxon>Glires</taxon>
        <taxon>Rodentia</taxon>
        <taxon>Myomorpha</taxon>
        <taxon>Muroidea</taxon>
        <taxon>Muridae</taxon>
        <taxon>Murinae</taxon>
        <taxon>Mus</taxon>
        <taxon>Mus</taxon>
    </lineage>
</organism>
<proteinExistence type="evidence at protein level"/>